<evidence type="ECO:0000250" key="1"/>
<evidence type="ECO:0000255" key="2"/>
<evidence type="ECO:0000305" key="3"/>
<name>HRTB_STAAR</name>
<organism>
    <name type="scientific">Staphylococcus aureus (strain MRSA252)</name>
    <dbReference type="NCBI Taxonomy" id="282458"/>
    <lineage>
        <taxon>Bacteria</taxon>
        <taxon>Bacillati</taxon>
        <taxon>Bacillota</taxon>
        <taxon>Bacilli</taxon>
        <taxon>Bacillales</taxon>
        <taxon>Staphylococcaceae</taxon>
        <taxon>Staphylococcus</taxon>
    </lineage>
</organism>
<dbReference type="EMBL" id="BX571856">
    <property type="protein sequence ID" value="CAG41428.1"/>
    <property type="molecule type" value="Genomic_DNA"/>
</dbReference>
<dbReference type="RefSeq" id="WP_000761409.1">
    <property type="nucleotide sequence ID" value="NC_002952.2"/>
</dbReference>
<dbReference type="SMR" id="Q6GE74"/>
<dbReference type="KEGG" id="sar:SAR2446"/>
<dbReference type="HOGENOM" id="CLU_060907_1_0_9"/>
<dbReference type="Proteomes" id="UP000000596">
    <property type="component" value="Chromosome"/>
</dbReference>
<dbReference type="GO" id="GO:0005886">
    <property type="term" value="C:plasma membrane"/>
    <property type="evidence" value="ECO:0007669"/>
    <property type="project" value="UniProtKB-SubCell"/>
</dbReference>
<dbReference type="InterPro" id="IPR051125">
    <property type="entry name" value="ABC-4/HrtB_transporter"/>
</dbReference>
<dbReference type="InterPro" id="IPR003838">
    <property type="entry name" value="ABC3_permease_C"/>
</dbReference>
<dbReference type="InterPro" id="IPR025857">
    <property type="entry name" value="MacB_PCD"/>
</dbReference>
<dbReference type="PANTHER" id="PTHR43738">
    <property type="entry name" value="ABC TRANSPORTER, MEMBRANE PROTEIN"/>
    <property type="match status" value="1"/>
</dbReference>
<dbReference type="PANTHER" id="PTHR43738:SF1">
    <property type="entry name" value="HEMIN TRANSPORT SYSTEM PERMEASE PROTEIN HRTB-RELATED"/>
    <property type="match status" value="1"/>
</dbReference>
<dbReference type="Pfam" id="PF02687">
    <property type="entry name" value="FtsX"/>
    <property type="match status" value="1"/>
</dbReference>
<dbReference type="Pfam" id="PF12704">
    <property type="entry name" value="MacB_PCD"/>
    <property type="match status" value="1"/>
</dbReference>
<sequence>MKLAIKEIMFYKFRYILITLIILLLSIMVLFISGLAQGLGRENISLFEHFDNDEYVVQKMKEPQIEKSQLSDTQQNQIKKVIHQESYKMNIQTLKLSNKEQDVITMNDVKQQRIQLKKGDYPKNAHEVAINDKLAADNIRVGDRLHFKNNSTSYRVSGILNDTMYSHSSIVLLNDNGFNALNKVNTAFYPVKNLTQQQRDELNKINDVQVVNEKDLTDNIASYQAEQAPLNMMIVSLFAITAIVLSAFFYVMTIQKISQIGILKAIGIKTRHLLSALVLQILTLTIIGVGIAVIIIVGLSFMMPVTMPFYLTTQNILLMVGIFILVAILGASLSFIKLFKVDPIEAIGGAE</sequence>
<proteinExistence type="inferred from homology"/>
<reference key="1">
    <citation type="journal article" date="2004" name="Proc. Natl. Acad. Sci. U.S.A.">
        <title>Complete genomes of two clinical Staphylococcus aureus strains: evidence for the rapid evolution of virulence and drug resistance.</title>
        <authorList>
            <person name="Holden M.T.G."/>
            <person name="Feil E.J."/>
            <person name="Lindsay J.A."/>
            <person name="Peacock S.J."/>
            <person name="Day N.P.J."/>
            <person name="Enright M.C."/>
            <person name="Foster T.J."/>
            <person name="Moore C.E."/>
            <person name="Hurst L."/>
            <person name="Atkin R."/>
            <person name="Barron A."/>
            <person name="Bason N."/>
            <person name="Bentley S.D."/>
            <person name="Chillingworth C."/>
            <person name="Chillingworth T."/>
            <person name="Churcher C."/>
            <person name="Clark L."/>
            <person name="Corton C."/>
            <person name="Cronin A."/>
            <person name="Doggett J."/>
            <person name="Dowd L."/>
            <person name="Feltwell T."/>
            <person name="Hance Z."/>
            <person name="Harris B."/>
            <person name="Hauser H."/>
            <person name="Holroyd S."/>
            <person name="Jagels K."/>
            <person name="James K.D."/>
            <person name="Lennard N."/>
            <person name="Line A."/>
            <person name="Mayes R."/>
            <person name="Moule S."/>
            <person name="Mungall K."/>
            <person name="Ormond D."/>
            <person name="Quail M.A."/>
            <person name="Rabbinowitsch E."/>
            <person name="Rutherford K.M."/>
            <person name="Sanders M."/>
            <person name="Sharp S."/>
            <person name="Simmonds M."/>
            <person name="Stevens K."/>
            <person name="Whitehead S."/>
            <person name="Barrell B.G."/>
            <person name="Spratt B.G."/>
            <person name="Parkhill J."/>
        </authorList>
    </citation>
    <scope>NUCLEOTIDE SEQUENCE [LARGE SCALE GENOMIC DNA]</scope>
    <source>
        <strain>MRSA252</strain>
    </source>
</reference>
<accession>Q6GE74</accession>
<feature type="chain" id="PRO_0000270526" description="Putative hemin transport system permease protein HrtB">
    <location>
        <begin position="1"/>
        <end position="351"/>
    </location>
</feature>
<feature type="transmembrane region" description="Helical" evidence="2">
    <location>
        <begin position="16"/>
        <end position="36"/>
    </location>
</feature>
<feature type="transmembrane region" description="Helical" evidence="2">
    <location>
        <begin position="234"/>
        <end position="254"/>
    </location>
</feature>
<feature type="transmembrane region" description="Helical" evidence="2">
    <location>
        <begin position="281"/>
        <end position="301"/>
    </location>
</feature>
<feature type="transmembrane region" description="Helical" evidence="2">
    <location>
        <begin position="316"/>
        <end position="336"/>
    </location>
</feature>
<gene>
    <name type="primary">hrtB</name>
    <name type="ordered locus">SAR2446</name>
</gene>
<protein>
    <recommendedName>
        <fullName>Putative hemin transport system permease protein HrtB</fullName>
    </recommendedName>
</protein>
<comment type="function">
    <text evidence="1">Part of the ABC transporter complex hrt involved in hemin import. Responsible for the translocation of the substrate across the membrane (By similarity).</text>
</comment>
<comment type="subunit">
    <text evidence="1">The complex is composed of two ATP-binding proteins (HrtA), two transmembrane proteins (HrtB) and a solute-binding protein.</text>
</comment>
<comment type="subcellular location">
    <subcellularLocation>
        <location evidence="3">Cell membrane</location>
        <topology evidence="3">Multi-pass membrane protein</topology>
    </subcellularLocation>
</comment>
<comment type="similarity">
    <text evidence="3">Belongs to the ABC-4 integral membrane protein family. HrtB subfamily.</text>
</comment>
<keyword id="KW-1003">Cell membrane</keyword>
<keyword id="KW-0472">Membrane</keyword>
<keyword id="KW-0812">Transmembrane</keyword>
<keyword id="KW-1133">Transmembrane helix</keyword>
<keyword id="KW-0813">Transport</keyword>